<reference key="1">
    <citation type="submission" date="2007-05" db="EMBL/GenBank/DDBJ databases">
        <title>Complete sequence of Dehalococcoides sp. BAV1.</title>
        <authorList>
            <consortium name="US DOE Joint Genome Institute"/>
            <person name="Copeland A."/>
            <person name="Lucas S."/>
            <person name="Lapidus A."/>
            <person name="Barry K."/>
            <person name="Detter J.C."/>
            <person name="Glavina del Rio T."/>
            <person name="Hammon N."/>
            <person name="Israni S."/>
            <person name="Pitluck S."/>
            <person name="Lowry S."/>
            <person name="Clum A."/>
            <person name="Schmutz J."/>
            <person name="Larimer F."/>
            <person name="Land M."/>
            <person name="Hauser L."/>
            <person name="Kyrpides N."/>
            <person name="Kim E."/>
            <person name="Ritalahti K.M."/>
            <person name="Loeffler F."/>
            <person name="Richardson P."/>
        </authorList>
    </citation>
    <scope>NUCLEOTIDE SEQUENCE [LARGE SCALE GENOMIC DNA]</scope>
    <source>
        <strain>ATCC BAA-2100 / JCM 16839 / KCTC 5957 / BAV1</strain>
    </source>
</reference>
<protein>
    <recommendedName>
        <fullName evidence="1">Heat-inducible transcription repressor HrcA</fullName>
    </recommendedName>
</protein>
<proteinExistence type="inferred from homology"/>
<name>HRCA_DEHMB</name>
<evidence type="ECO:0000255" key="1">
    <source>
        <dbReference type="HAMAP-Rule" id="MF_00081"/>
    </source>
</evidence>
<keyword id="KW-0678">Repressor</keyword>
<keyword id="KW-0346">Stress response</keyword>
<keyword id="KW-0804">Transcription</keyword>
<keyword id="KW-0805">Transcription regulation</keyword>
<accession>A5FPT3</accession>
<sequence>MLTSRAEIILRSIVRQYITKAVPVSSSSILEDCGLDICSATIRNEVVRLEIEGYILRPHHSAGSIPADKGYRYYVESLKDVELPTNDKFLIRHLFHQVEKEMEEWLNLTVAVLSQRVQSMAVVTMPRQTQGKVHHIELVSLQDNLVLVVLILRGAKVKQQLVNFENVVSQPELTLISNRLNDAYDGLTRFQIEQKPLGLNHDELKVKDSLVKMMRGEDEQESREPFFDGLHYMLEQPEFHQNQRAQEIMQLLEQKKLSKMIVPPMPFNRGVQVYIGQENASAEIRDYSLIVSQYGIPDEAVGTIGVIGPTRMAYERALSAVSYLSLVMSTLVAELYGKAPVDKDE</sequence>
<comment type="function">
    <text evidence="1">Negative regulator of class I heat shock genes (grpE-dnaK-dnaJ and groELS operons). Prevents heat-shock induction of these operons.</text>
</comment>
<comment type="similarity">
    <text evidence="1">Belongs to the HrcA family.</text>
</comment>
<feature type="chain" id="PRO_1000075287" description="Heat-inducible transcription repressor HrcA">
    <location>
        <begin position="1"/>
        <end position="345"/>
    </location>
</feature>
<gene>
    <name evidence="1" type="primary">hrcA</name>
    <name type="ordered locus">DehaBAV1_1210</name>
</gene>
<dbReference type="EMBL" id="CP000688">
    <property type="protein sequence ID" value="ABQ17789.1"/>
    <property type="molecule type" value="Genomic_DNA"/>
</dbReference>
<dbReference type="SMR" id="A5FPT3"/>
<dbReference type="KEGG" id="deb:DehaBAV1_1210"/>
<dbReference type="PATRIC" id="fig|216389.18.peg.1277"/>
<dbReference type="HOGENOM" id="CLU_050019_0_0_0"/>
<dbReference type="GO" id="GO:0003677">
    <property type="term" value="F:DNA binding"/>
    <property type="evidence" value="ECO:0007669"/>
    <property type="project" value="InterPro"/>
</dbReference>
<dbReference type="GO" id="GO:0045892">
    <property type="term" value="P:negative regulation of DNA-templated transcription"/>
    <property type="evidence" value="ECO:0007669"/>
    <property type="project" value="UniProtKB-UniRule"/>
</dbReference>
<dbReference type="Gene3D" id="3.30.450.40">
    <property type="match status" value="1"/>
</dbReference>
<dbReference type="Gene3D" id="3.30.390.60">
    <property type="entry name" value="Heat-inducible transcription repressor hrca homolog, domain 3"/>
    <property type="match status" value="1"/>
</dbReference>
<dbReference type="Gene3D" id="1.10.10.10">
    <property type="entry name" value="Winged helix-like DNA-binding domain superfamily/Winged helix DNA-binding domain"/>
    <property type="match status" value="1"/>
</dbReference>
<dbReference type="HAMAP" id="MF_00081">
    <property type="entry name" value="HrcA"/>
    <property type="match status" value="1"/>
</dbReference>
<dbReference type="InterPro" id="IPR029016">
    <property type="entry name" value="GAF-like_dom_sf"/>
</dbReference>
<dbReference type="InterPro" id="IPR002571">
    <property type="entry name" value="HrcA"/>
</dbReference>
<dbReference type="InterPro" id="IPR021153">
    <property type="entry name" value="HrcA_C"/>
</dbReference>
<dbReference type="InterPro" id="IPR036388">
    <property type="entry name" value="WH-like_DNA-bd_sf"/>
</dbReference>
<dbReference type="InterPro" id="IPR036390">
    <property type="entry name" value="WH_DNA-bd_sf"/>
</dbReference>
<dbReference type="InterPro" id="IPR023120">
    <property type="entry name" value="WHTH_transcript_rep_HrcA_IDD"/>
</dbReference>
<dbReference type="NCBIfam" id="TIGR00331">
    <property type="entry name" value="hrcA"/>
    <property type="match status" value="1"/>
</dbReference>
<dbReference type="PANTHER" id="PTHR34824">
    <property type="entry name" value="HEAT-INDUCIBLE TRANSCRIPTION REPRESSOR HRCA"/>
    <property type="match status" value="1"/>
</dbReference>
<dbReference type="PANTHER" id="PTHR34824:SF1">
    <property type="entry name" value="HEAT-INDUCIBLE TRANSCRIPTION REPRESSOR HRCA"/>
    <property type="match status" value="1"/>
</dbReference>
<dbReference type="Pfam" id="PF01628">
    <property type="entry name" value="HrcA"/>
    <property type="match status" value="1"/>
</dbReference>
<dbReference type="PIRSF" id="PIRSF005485">
    <property type="entry name" value="HrcA"/>
    <property type="match status" value="1"/>
</dbReference>
<dbReference type="SUPFAM" id="SSF55781">
    <property type="entry name" value="GAF domain-like"/>
    <property type="match status" value="1"/>
</dbReference>
<dbReference type="SUPFAM" id="SSF46785">
    <property type="entry name" value="Winged helix' DNA-binding domain"/>
    <property type="match status" value="1"/>
</dbReference>
<organism>
    <name type="scientific">Dehalococcoides mccartyi (strain ATCC BAA-2100 / JCM 16839 / KCTC 5957 / BAV1)</name>
    <dbReference type="NCBI Taxonomy" id="216389"/>
    <lineage>
        <taxon>Bacteria</taxon>
        <taxon>Bacillati</taxon>
        <taxon>Chloroflexota</taxon>
        <taxon>Dehalococcoidia</taxon>
        <taxon>Dehalococcoidales</taxon>
        <taxon>Dehalococcoidaceae</taxon>
        <taxon>Dehalococcoides</taxon>
    </lineage>
</organism>